<proteinExistence type="inferred from homology"/>
<organism>
    <name type="scientific">Paraburkholderia phytofirmans (strain DSM 17436 / LMG 22146 / PsJN)</name>
    <name type="common">Burkholderia phytofirmans</name>
    <dbReference type="NCBI Taxonomy" id="398527"/>
    <lineage>
        <taxon>Bacteria</taxon>
        <taxon>Pseudomonadati</taxon>
        <taxon>Pseudomonadota</taxon>
        <taxon>Betaproteobacteria</taxon>
        <taxon>Burkholderiales</taxon>
        <taxon>Burkholderiaceae</taxon>
        <taxon>Paraburkholderia</taxon>
    </lineage>
</organism>
<accession>B2SYY5</accession>
<feature type="chain" id="PRO_1000187046" description="3-demethoxyubiquinol 3-hydroxylase">
    <location>
        <begin position="1"/>
        <end position="212"/>
    </location>
</feature>
<feature type="binding site" evidence="1">
    <location>
        <position position="61"/>
    </location>
    <ligand>
        <name>Fe cation</name>
        <dbReference type="ChEBI" id="CHEBI:24875"/>
        <label>1</label>
    </ligand>
</feature>
<feature type="binding site" evidence="1">
    <location>
        <position position="91"/>
    </location>
    <ligand>
        <name>Fe cation</name>
        <dbReference type="ChEBI" id="CHEBI:24875"/>
        <label>1</label>
    </ligand>
</feature>
<feature type="binding site" evidence="1">
    <location>
        <position position="91"/>
    </location>
    <ligand>
        <name>Fe cation</name>
        <dbReference type="ChEBI" id="CHEBI:24875"/>
        <label>2</label>
    </ligand>
</feature>
<feature type="binding site" evidence="1">
    <location>
        <position position="94"/>
    </location>
    <ligand>
        <name>Fe cation</name>
        <dbReference type="ChEBI" id="CHEBI:24875"/>
        <label>1</label>
    </ligand>
</feature>
<feature type="binding site" evidence="1">
    <location>
        <position position="143"/>
    </location>
    <ligand>
        <name>Fe cation</name>
        <dbReference type="ChEBI" id="CHEBI:24875"/>
        <label>2</label>
    </ligand>
</feature>
<feature type="binding site" evidence="1">
    <location>
        <position position="175"/>
    </location>
    <ligand>
        <name>Fe cation</name>
        <dbReference type="ChEBI" id="CHEBI:24875"/>
        <label>1</label>
    </ligand>
</feature>
<feature type="binding site" evidence="1">
    <location>
        <position position="175"/>
    </location>
    <ligand>
        <name>Fe cation</name>
        <dbReference type="ChEBI" id="CHEBI:24875"/>
        <label>2</label>
    </ligand>
</feature>
<feature type="binding site" evidence="1">
    <location>
        <position position="178"/>
    </location>
    <ligand>
        <name>Fe cation</name>
        <dbReference type="ChEBI" id="CHEBI:24875"/>
        <label>2</label>
    </ligand>
</feature>
<dbReference type="EC" id="1.14.99.60" evidence="1"/>
<dbReference type="EMBL" id="CP001052">
    <property type="protein sequence ID" value="ACD17870.1"/>
    <property type="molecule type" value="Genomic_DNA"/>
</dbReference>
<dbReference type="RefSeq" id="WP_012434431.1">
    <property type="nucleotide sequence ID" value="NC_010681.1"/>
</dbReference>
<dbReference type="SMR" id="B2SYY5"/>
<dbReference type="STRING" id="398527.Bphyt_3480"/>
<dbReference type="KEGG" id="bpy:Bphyt_3480"/>
<dbReference type="eggNOG" id="COG2941">
    <property type="taxonomic scope" value="Bacteria"/>
</dbReference>
<dbReference type="HOGENOM" id="CLU_088601_0_0_4"/>
<dbReference type="OrthoDB" id="5192789at2"/>
<dbReference type="UniPathway" id="UPA00232"/>
<dbReference type="Proteomes" id="UP000001739">
    <property type="component" value="Chromosome 1"/>
</dbReference>
<dbReference type="GO" id="GO:0005886">
    <property type="term" value="C:plasma membrane"/>
    <property type="evidence" value="ECO:0007669"/>
    <property type="project" value="UniProtKB-SubCell"/>
</dbReference>
<dbReference type="GO" id="GO:0008682">
    <property type="term" value="F:3-demethoxyubiquinol 3-hydroxylase activity"/>
    <property type="evidence" value="ECO:0007669"/>
    <property type="project" value="UniProtKB-EC"/>
</dbReference>
<dbReference type="GO" id="GO:0046872">
    <property type="term" value="F:metal ion binding"/>
    <property type="evidence" value="ECO:0007669"/>
    <property type="project" value="UniProtKB-KW"/>
</dbReference>
<dbReference type="GO" id="GO:0006744">
    <property type="term" value="P:ubiquinone biosynthetic process"/>
    <property type="evidence" value="ECO:0007669"/>
    <property type="project" value="UniProtKB-UniRule"/>
</dbReference>
<dbReference type="CDD" id="cd01042">
    <property type="entry name" value="DMQH"/>
    <property type="match status" value="1"/>
</dbReference>
<dbReference type="Gene3D" id="1.20.1260.10">
    <property type="match status" value="1"/>
</dbReference>
<dbReference type="HAMAP" id="MF_01658">
    <property type="entry name" value="COQ7"/>
    <property type="match status" value="1"/>
</dbReference>
<dbReference type="InterPro" id="IPR047809">
    <property type="entry name" value="COQ7_proteobact"/>
</dbReference>
<dbReference type="InterPro" id="IPR012347">
    <property type="entry name" value="Ferritin-like"/>
</dbReference>
<dbReference type="InterPro" id="IPR009078">
    <property type="entry name" value="Ferritin-like_SF"/>
</dbReference>
<dbReference type="InterPro" id="IPR011566">
    <property type="entry name" value="Ubq_synth_Coq7"/>
</dbReference>
<dbReference type="NCBIfam" id="NF033656">
    <property type="entry name" value="DMQ_monoox_COQ7"/>
    <property type="match status" value="1"/>
</dbReference>
<dbReference type="PANTHER" id="PTHR11237:SF4">
    <property type="entry name" value="5-DEMETHOXYUBIQUINONE HYDROXYLASE, MITOCHONDRIAL"/>
    <property type="match status" value="1"/>
</dbReference>
<dbReference type="PANTHER" id="PTHR11237">
    <property type="entry name" value="COENZYME Q10 BIOSYNTHESIS PROTEIN 7"/>
    <property type="match status" value="1"/>
</dbReference>
<dbReference type="Pfam" id="PF03232">
    <property type="entry name" value="COQ7"/>
    <property type="match status" value="1"/>
</dbReference>
<dbReference type="SUPFAM" id="SSF47240">
    <property type="entry name" value="Ferritin-like"/>
    <property type="match status" value="1"/>
</dbReference>
<evidence type="ECO:0000255" key="1">
    <source>
        <dbReference type="HAMAP-Rule" id="MF_01658"/>
    </source>
</evidence>
<name>COQ7_PARPJ</name>
<comment type="function">
    <text evidence="1">Catalyzes the hydroxylation of 2-nonaprenyl-3-methyl-6-methoxy-1,4-benzoquinol during ubiquinone biosynthesis.</text>
</comment>
<comment type="catalytic activity">
    <reaction evidence="1">
        <text>a 5-methoxy-2-methyl-3-(all-trans-polyprenyl)benzene-1,4-diol + AH2 + O2 = a 3-demethylubiquinol + A + H2O</text>
        <dbReference type="Rhea" id="RHEA:50908"/>
        <dbReference type="Rhea" id="RHEA-COMP:10859"/>
        <dbReference type="Rhea" id="RHEA-COMP:10914"/>
        <dbReference type="ChEBI" id="CHEBI:13193"/>
        <dbReference type="ChEBI" id="CHEBI:15377"/>
        <dbReference type="ChEBI" id="CHEBI:15379"/>
        <dbReference type="ChEBI" id="CHEBI:17499"/>
        <dbReference type="ChEBI" id="CHEBI:84167"/>
        <dbReference type="ChEBI" id="CHEBI:84422"/>
        <dbReference type="EC" id="1.14.99.60"/>
    </reaction>
</comment>
<comment type="cofactor">
    <cofactor evidence="1">
        <name>Fe cation</name>
        <dbReference type="ChEBI" id="CHEBI:24875"/>
    </cofactor>
    <text evidence="1">Binds 2 iron ions per subunit.</text>
</comment>
<comment type="pathway">
    <text evidence="1">Cofactor biosynthesis; ubiquinone biosynthesis.</text>
</comment>
<comment type="subcellular location">
    <subcellularLocation>
        <location evidence="1">Cell membrane</location>
        <topology evidence="1">Peripheral membrane protein</topology>
    </subcellularLocation>
</comment>
<comment type="similarity">
    <text evidence="1">Belongs to the COQ7 family.</text>
</comment>
<reference key="1">
    <citation type="journal article" date="2011" name="J. Bacteriol.">
        <title>Complete genome sequence of the plant growth-promoting endophyte Burkholderia phytofirmans strain PsJN.</title>
        <authorList>
            <person name="Weilharter A."/>
            <person name="Mitter B."/>
            <person name="Shin M.V."/>
            <person name="Chain P.S."/>
            <person name="Nowak J."/>
            <person name="Sessitsch A."/>
        </authorList>
    </citation>
    <scope>NUCLEOTIDE SEQUENCE [LARGE SCALE GENOMIC DNA]</scope>
    <source>
        <strain>DSM 17436 / LMG 22146 / PsJN</strain>
    </source>
</reference>
<sequence>MFLDELISEFDRGLRSMTGVSRMSRPLPVPQESKVTEPAVELSPAERAHAAGLMRVNHVGEVCAQALYQAQKLATKSPSLRAVFDRAAIEEEDHLAWTSKRLEALDSRPSLLNPLWYTGALAIGLAAGRMGDRVSLGFMAETERQVELHLDSHLDELPAADHESRAIVEQMRVDEAEHGKAAMEAGGLELPFPARALMRAVSKVMTRTAYYI</sequence>
<keyword id="KW-1003">Cell membrane</keyword>
<keyword id="KW-0408">Iron</keyword>
<keyword id="KW-0472">Membrane</keyword>
<keyword id="KW-0479">Metal-binding</keyword>
<keyword id="KW-0503">Monooxygenase</keyword>
<keyword id="KW-0560">Oxidoreductase</keyword>
<keyword id="KW-0831">Ubiquinone biosynthesis</keyword>
<protein>
    <recommendedName>
        <fullName evidence="1">3-demethoxyubiquinol 3-hydroxylase</fullName>
        <shortName evidence="1">DMQ hydroxylase</shortName>
        <ecNumber evidence="1">1.14.99.60</ecNumber>
    </recommendedName>
    <alternativeName>
        <fullName evidence="1">2-nonaprenyl-3-methyl-6-methoxy-1,4-benzoquinol hydroxylase</fullName>
    </alternativeName>
</protein>
<gene>
    <name evidence="1" type="primary">coq7</name>
    <name type="ordered locus">Bphyt_3480</name>
</gene>